<accession>Q0SN69</accession>
<accession>G0IS82</accession>
<proteinExistence type="inferred from homology"/>
<feature type="chain" id="PRO_1000013288" description="Large ribosomal subunit protein bL34">
    <location>
        <begin position="1"/>
        <end position="51"/>
    </location>
</feature>
<sequence length="51" mass="6183">MKRTYQPSRVKRNRKFGFRARMKTKGGRLILSRRRAKGRIKLTVSDEKKKY</sequence>
<evidence type="ECO:0000255" key="1">
    <source>
        <dbReference type="HAMAP-Rule" id="MF_00391"/>
    </source>
</evidence>
<evidence type="ECO:0000305" key="2"/>
<comment type="similarity">
    <text evidence="1">Belongs to the bacterial ribosomal protein bL34 family.</text>
</comment>
<gene>
    <name evidence="1" type="primary">rpmH</name>
    <name type="ordered locus">BAPKO_0462</name>
    <name type="ordered locus">BafPKo_0451</name>
</gene>
<name>RL34_BORAP</name>
<organism>
    <name type="scientific">Borreliella afzelii (strain PKo)</name>
    <name type="common">Borrelia afzelii</name>
    <dbReference type="NCBI Taxonomy" id="390236"/>
    <lineage>
        <taxon>Bacteria</taxon>
        <taxon>Pseudomonadati</taxon>
        <taxon>Spirochaetota</taxon>
        <taxon>Spirochaetia</taxon>
        <taxon>Spirochaetales</taxon>
        <taxon>Borreliaceae</taxon>
        <taxon>Borreliella</taxon>
    </lineage>
</organism>
<keyword id="KW-0687">Ribonucleoprotein</keyword>
<keyword id="KW-0689">Ribosomal protein</keyword>
<dbReference type="EMBL" id="CP000395">
    <property type="protein sequence ID" value="ABH01709.1"/>
    <property type="molecule type" value="Genomic_DNA"/>
</dbReference>
<dbReference type="EMBL" id="CP002933">
    <property type="protein sequence ID" value="AEL69663.1"/>
    <property type="molecule type" value="Genomic_DNA"/>
</dbReference>
<dbReference type="RefSeq" id="WP_004789541.1">
    <property type="nucleotide sequence ID" value="NZ_CP160066.1"/>
</dbReference>
<dbReference type="SMR" id="Q0SN69"/>
<dbReference type="STRING" id="29518.BLA32_02080"/>
<dbReference type="GeneID" id="77265283"/>
<dbReference type="KEGG" id="baf:BAPKO_0462"/>
<dbReference type="KEGG" id="bafz:BafPKo_0451"/>
<dbReference type="PATRIC" id="fig|390236.22.peg.435"/>
<dbReference type="eggNOG" id="COG0230">
    <property type="taxonomic scope" value="Bacteria"/>
</dbReference>
<dbReference type="HOGENOM" id="CLU_129938_2_0_12"/>
<dbReference type="OrthoDB" id="9804164at2"/>
<dbReference type="Proteomes" id="UP000005216">
    <property type="component" value="Chromosome"/>
</dbReference>
<dbReference type="GO" id="GO:1990904">
    <property type="term" value="C:ribonucleoprotein complex"/>
    <property type="evidence" value="ECO:0007669"/>
    <property type="project" value="UniProtKB-KW"/>
</dbReference>
<dbReference type="GO" id="GO:0005840">
    <property type="term" value="C:ribosome"/>
    <property type="evidence" value="ECO:0007669"/>
    <property type="project" value="UniProtKB-KW"/>
</dbReference>
<dbReference type="GO" id="GO:0003735">
    <property type="term" value="F:structural constituent of ribosome"/>
    <property type="evidence" value="ECO:0007669"/>
    <property type="project" value="InterPro"/>
</dbReference>
<dbReference type="GO" id="GO:0006412">
    <property type="term" value="P:translation"/>
    <property type="evidence" value="ECO:0007669"/>
    <property type="project" value="UniProtKB-UniRule"/>
</dbReference>
<dbReference type="FunFam" id="1.10.287.3980:FF:000001">
    <property type="entry name" value="Mitochondrial ribosomal protein L34"/>
    <property type="match status" value="1"/>
</dbReference>
<dbReference type="Gene3D" id="1.10.287.3980">
    <property type="match status" value="1"/>
</dbReference>
<dbReference type="HAMAP" id="MF_00391">
    <property type="entry name" value="Ribosomal_bL34"/>
    <property type="match status" value="1"/>
</dbReference>
<dbReference type="InterPro" id="IPR000271">
    <property type="entry name" value="Ribosomal_bL34"/>
</dbReference>
<dbReference type="InterPro" id="IPR020939">
    <property type="entry name" value="Ribosomal_bL34_CS"/>
</dbReference>
<dbReference type="NCBIfam" id="TIGR01030">
    <property type="entry name" value="rpmH_bact"/>
    <property type="match status" value="1"/>
</dbReference>
<dbReference type="PANTHER" id="PTHR14503:SF4">
    <property type="entry name" value="LARGE RIBOSOMAL SUBUNIT PROTEIN BL34M"/>
    <property type="match status" value="1"/>
</dbReference>
<dbReference type="PANTHER" id="PTHR14503">
    <property type="entry name" value="MITOCHONDRIAL RIBOSOMAL PROTEIN 34 FAMILY MEMBER"/>
    <property type="match status" value="1"/>
</dbReference>
<dbReference type="Pfam" id="PF00468">
    <property type="entry name" value="Ribosomal_L34"/>
    <property type="match status" value="1"/>
</dbReference>
<dbReference type="PROSITE" id="PS00784">
    <property type="entry name" value="RIBOSOMAL_L34"/>
    <property type="match status" value="1"/>
</dbReference>
<reference key="1">
    <citation type="journal article" date="2006" name="BMC Genomics">
        <title>Comparative genome analysis: selection pressure on the Borrelia vls cassettes is essential for infectivity.</title>
        <authorList>
            <person name="Gloeckner G."/>
            <person name="Schulte-Spechtel U."/>
            <person name="Schilhabel M."/>
            <person name="Felder M."/>
            <person name="Suehnel J."/>
            <person name="Wilske B."/>
            <person name="Platzer M."/>
        </authorList>
    </citation>
    <scope>NUCLEOTIDE SEQUENCE [LARGE SCALE GENOMIC DNA]</scope>
    <source>
        <strain>PKo</strain>
    </source>
</reference>
<reference key="2">
    <citation type="journal article" date="2011" name="J. Bacteriol.">
        <title>Whole-genome sequences of two Borrelia afzelii and two Borrelia garinii Lyme disease agent isolates.</title>
        <authorList>
            <person name="Casjens S.R."/>
            <person name="Mongodin E.F."/>
            <person name="Qiu W.G."/>
            <person name="Dunn J.J."/>
            <person name="Luft B.J."/>
            <person name="Fraser-Liggett C.M."/>
            <person name="Schutzer S.E."/>
        </authorList>
    </citation>
    <scope>NUCLEOTIDE SEQUENCE [LARGE SCALE GENOMIC DNA]</scope>
    <source>
        <strain>PKo</strain>
    </source>
</reference>
<protein>
    <recommendedName>
        <fullName evidence="1">Large ribosomal subunit protein bL34</fullName>
    </recommendedName>
    <alternativeName>
        <fullName evidence="2">50S ribosomal protein L34</fullName>
    </alternativeName>
</protein>